<organism>
    <name type="scientific">Chlamydia caviae (strain ATCC VR-813 / DSM 19441 / 03DC25 / GPIC)</name>
    <name type="common">Chlamydophila caviae</name>
    <dbReference type="NCBI Taxonomy" id="227941"/>
    <lineage>
        <taxon>Bacteria</taxon>
        <taxon>Pseudomonadati</taxon>
        <taxon>Chlamydiota</taxon>
        <taxon>Chlamydiia</taxon>
        <taxon>Chlamydiales</taxon>
        <taxon>Chlamydiaceae</taxon>
        <taxon>Chlamydia/Chlamydophila group</taxon>
        <taxon>Chlamydia</taxon>
    </lineage>
</organism>
<protein>
    <recommendedName>
        <fullName evidence="1">Inorganic pyrophosphatase</fullName>
        <ecNumber evidence="1">3.6.1.1</ecNumber>
    </recommendedName>
    <alternativeName>
        <fullName evidence="1">Pyrophosphate phospho-hydrolase</fullName>
        <shortName evidence="1">PPase</shortName>
    </alternativeName>
</protein>
<sequence>MSEKPSLSIMHPWHGPILTQDNYESLCCYIEITPQDSVKFELDKATGLLKVDRPQKFSNFCPCLYGLLPRTYCGELSGKYSGEQSLKENIQGDDDPLDICVLTEKNITHGNILLQARPIGGLRIIDSGEADDKIIAVLEDDLVFSEIQDISDCPCTVLDMIQHYFLTYKASPEHLIHGKPAKIEIVGIYGKKEAQKVIELAHQDYLNKFCREKTTI</sequence>
<comment type="function">
    <text evidence="1">Catalyzes the hydrolysis of inorganic pyrophosphate (PPi) forming two phosphate ions.</text>
</comment>
<comment type="catalytic activity">
    <reaction evidence="1">
        <text>diphosphate + H2O = 2 phosphate + H(+)</text>
        <dbReference type="Rhea" id="RHEA:24576"/>
        <dbReference type="ChEBI" id="CHEBI:15377"/>
        <dbReference type="ChEBI" id="CHEBI:15378"/>
        <dbReference type="ChEBI" id="CHEBI:33019"/>
        <dbReference type="ChEBI" id="CHEBI:43474"/>
        <dbReference type="EC" id="3.6.1.1"/>
    </reaction>
</comment>
<comment type="cofactor">
    <cofactor evidence="1">
        <name>Mg(2+)</name>
        <dbReference type="ChEBI" id="CHEBI:18420"/>
    </cofactor>
</comment>
<comment type="subunit">
    <text evidence="1">Homohexamer.</text>
</comment>
<comment type="subcellular location">
    <subcellularLocation>
        <location evidence="1">Cytoplasm</location>
    </subcellularLocation>
</comment>
<comment type="similarity">
    <text evidence="1">Belongs to the PPase family.</text>
</comment>
<gene>
    <name evidence="1" type="primary">ppa</name>
    <name type="ordered locus">CCA_00851</name>
</gene>
<accession>Q821T4</accession>
<dbReference type="EC" id="3.6.1.1" evidence="1"/>
<dbReference type="EMBL" id="AE015925">
    <property type="protein sequence ID" value="AAP05592.1"/>
    <property type="molecule type" value="Genomic_DNA"/>
</dbReference>
<dbReference type="RefSeq" id="WP_011006806.1">
    <property type="nucleotide sequence ID" value="NC_003361.3"/>
</dbReference>
<dbReference type="SMR" id="Q821T4"/>
<dbReference type="STRING" id="227941.CCA_00851"/>
<dbReference type="KEGG" id="cca:CCA_00851"/>
<dbReference type="eggNOG" id="COG0221">
    <property type="taxonomic scope" value="Bacteria"/>
</dbReference>
<dbReference type="HOGENOM" id="CLU_073198_2_1_0"/>
<dbReference type="OrthoDB" id="5187599at2"/>
<dbReference type="Proteomes" id="UP000002193">
    <property type="component" value="Chromosome"/>
</dbReference>
<dbReference type="GO" id="GO:0005737">
    <property type="term" value="C:cytoplasm"/>
    <property type="evidence" value="ECO:0007669"/>
    <property type="project" value="UniProtKB-SubCell"/>
</dbReference>
<dbReference type="GO" id="GO:0004427">
    <property type="term" value="F:inorganic diphosphate phosphatase activity"/>
    <property type="evidence" value="ECO:0007669"/>
    <property type="project" value="UniProtKB-UniRule"/>
</dbReference>
<dbReference type="GO" id="GO:0000287">
    <property type="term" value="F:magnesium ion binding"/>
    <property type="evidence" value="ECO:0007669"/>
    <property type="project" value="UniProtKB-UniRule"/>
</dbReference>
<dbReference type="GO" id="GO:0006796">
    <property type="term" value="P:phosphate-containing compound metabolic process"/>
    <property type="evidence" value="ECO:0007669"/>
    <property type="project" value="InterPro"/>
</dbReference>
<dbReference type="CDD" id="cd00412">
    <property type="entry name" value="pyrophosphatase"/>
    <property type="match status" value="1"/>
</dbReference>
<dbReference type="Gene3D" id="3.90.80.10">
    <property type="entry name" value="Inorganic pyrophosphatase"/>
    <property type="match status" value="1"/>
</dbReference>
<dbReference type="HAMAP" id="MF_00209">
    <property type="entry name" value="Inorganic_PPase"/>
    <property type="match status" value="1"/>
</dbReference>
<dbReference type="InterPro" id="IPR008162">
    <property type="entry name" value="Pyrophosphatase"/>
</dbReference>
<dbReference type="InterPro" id="IPR036649">
    <property type="entry name" value="Pyrophosphatase_sf"/>
</dbReference>
<dbReference type="NCBIfam" id="NF001886">
    <property type="entry name" value="PRK00642.1"/>
    <property type="match status" value="1"/>
</dbReference>
<dbReference type="PANTHER" id="PTHR10286">
    <property type="entry name" value="INORGANIC PYROPHOSPHATASE"/>
    <property type="match status" value="1"/>
</dbReference>
<dbReference type="Pfam" id="PF00719">
    <property type="entry name" value="Pyrophosphatase"/>
    <property type="match status" value="1"/>
</dbReference>
<dbReference type="SUPFAM" id="SSF50324">
    <property type="entry name" value="Inorganic pyrophosphatase"/>
    <property type="match status" value="1"/>
</dbReference>
<dbReference type="PROSITE" id="PS00387">
    <property type="entry name" value="PPASE"/>
    <property type="match status" value="1"/>
</dbReference>
<keyword id="KW-0963">Cytoplasm</keyword>
<keyword id="KW-0378">Hydrolase</keyword>
<keyword id="KW-0460">Magnesium</keyword>
<keyword id="KW-0479">Metal-binding</keyword>
<feature type="chain" id="PRO_0000137489" description="Inorganic pyrophosphatase">
    <location>
        <begin position="1"/>
        <end position="216"/>
    </location>
</feature>
<feature type="binding site" evidence="1">
    <location>
        <position position="39"/>
    </location>
    <ligand>
        <name>substrate</name>
    </ligand>
</feature>
<feature type="binding site" evidence="1">
    <location>
        <position position="53"/>
    </location>
    <ligand>
        <name>substrate</name>
    </ligand>
</feature>
<feature type="binding site" evidence="1">
    <location>
        <position position="65"/>
    </location>
    <ligand>
        <name>substrate</name>
    </ligand>
</feature>
<feature type="binding site" evidence="1">
    <location>
        <position position="93"/>
    </location>
    <ligand>
        <name>Mg(2+)</name>
        <dbReference type="ChEBI" id="CHEBI:18420"/>
        <label>1</label>
    </ligand>
</feature>
<feature type="binding site" evidence="1">
    <location>
        <position position="98"/>
    </location>
    <ligand>
        <name>Mg(2+)</name>
        <dbReference type="ChEBI" id="CHEBI:18420"/>
        <label>1</label>
    </ligand>
</feature>
<feature type="binding site" evidence="1">
    <location>
        <position position="98"/>
    </location>
    <ligand>
        <name>Mg(2+)</name>
        <dbReference type="ChEBI" id="CHEBI:18420"/>
        <label>2</label>
    </ligand>
</feature>
<feature type="binding site" evidence="1">
    <location>
        <position position="131"/>
    </location>
    <ligand>
        <name>Mg(2+)</name>
        <dbReference type="ChEBI" id="CHEBI:18420"/>
        <label>1</label>
    </ligand>
</feature>
<feature type="binding site" evidence="1">
    <location>
        <position position="168"/>
    </location>
    <ligand>
        <name>substrate</name>
    </ligand>
</feature>
<evidence type="ECO:0000255" key="1">
    <source>
        <dbReference type="HAMAP-Rule" id="MF_00209"/>
    </source>
</evidence>
<name>IPYR_CHLCV</name>
<proteinExistence type="inferred from homology"/>
<reference key="1">
    <citation type="journal article" date="2003" name="Nucleic Acids Res.">
        <title>Genome sequence of Chlamydophila caviae (Chlamydia psittaci GPIC): examining the role of niche-specific genes in the evolution of the Chlamydiaceae.</title>
        <authorList>
            <person name="Read T.D."/>
            <person name="Myers G.S.A."/>
            <person name="Brunham R.C."/>
            <person name="Nelson W.C."/>
            <person name="Paulsen I.T."/>
            <person name="Heidelberg J.F."/>
            <person name="Holtzapple E.K."/>
            <person name="Khouri H.M."/>
            <person name="Federova N.B."/>
            <person name="Carty H.A."/>
            <person name="Umayam L.A."/>
            <person name="Haft D.H."/>
            <person name="Peterson J.D."/>
            <person name="Beanan M.J."/>
            <person name="White O."/>
            <person name="Salzberg S.L."/>
            <person name="Hsia R.-C."/>
            <person name="McClarty G."/>
            <person name="Rank R.G."/>
            <person name="Bavoil P.M."/>
            <person name="Fraser C.M."/>
        </authorList>
    </citation>
    <scope>NUCLEOTIDE SEQUENCE [LARGE SCALE GENOMIC DNA]</scope>
    <source>
        <strain>ATCC VR-813 / DSM 19441 / 03DC25 / GPIC</strain>
    </source>
</reference>